<comment type="function">
    <text evidence="1 4">Inhibits PIK3C3 activity; under basal conditions negatively regulates PI3K complex II (PI3KC3-C2) function in autophagy. Negatively regulates endosome maturation and degradative endocytic trafficking and impairs autophagosome maturation process (PubMed:19270693). Can sequester UVRAG from association with a class C Vps complex (possibly the HOPS complex) and negatively regulates Rab7 activation (By similarity).</text>
</comment>
<comment type="function">
    <text evidence="1">Involved in regulation of pathogen-specific host defense of activated macrophages. Following bacterial infection promotes NADH oxidase activity by association with CYBA thereby affecting TLR2 signaling and probably other TLR-NOX pathways. Stabilizes the CYBA:CYBB NADPH oxidase heterodimer, increases its association with TLR2 and its phagosome trafficking to induce antimicrobial burst of ROS and production of inflammatory cytokines. Following fungal or viral infection (implicating CLEC7A (dectin-1)-mediated myeloid cell activation or RIGI-dependent sensing of RNA viruses) negatively regulates pro-inflammatory cytokine production by association with CARD9 and sequestering it from signaling complexes (By similarity).</text>
</comment>
<comment type="subunit">
    <text evidence="1 4">Associates with PI3K (PI3KC3/PI3K-III/class III phosphatidylinositol 3-kinase) complex II (PI3KC3-C2) in which the core composed of the catalytic subunit PIK3C3, the regulatory subunit PIK3R4 and BECN1 is associated with UVRAG; in the complex interacts directly with PI3KC3 and UVRAG (PubMed:19270693). Interacts with Rab7 (RAB7A or RAB7B) (GTP-bound form); Rab7 and UVRAG compete for RUBCN binding; can interact simultaneously with Rab7 and the PI3K complex. Interacts with CYBA and CYBB; indicative for the association with the CYBA:CYBB NADPH oxidase heterodimer. Interacts with NOX4 and probably associates with the CYBA:NOX4 complex. Interacts with YWHAB and CARD9 in a competitive and stimulation-dependent manner; RUBCN exchanges interaction from YWHAB to CARD9 upon stimulation with beta-1,3-glucan (By similarity).</text>
</comment>
<comment type="interaction">
    <interactant intactId="EBI-3506572">
        <id>Q80U62</id>
    </interactant>
    <interactant intactId="EBI-297353">
        <id>P00533</id>
        <label>EGFR</label>
    </interactant>
    <organismsDiffer>true</organismsDiffer>
    <experiments>2</experiments>
</comment>
<comment type="subcellular location">
    <subcellularLocation>
        <location evidence="4">Late endosome</location>
    </subcellularLocation>
    <subcellularLocation>
        <location evidence="4">Lysosome</location>
    </subcellularLocation>
    <subcellularLocation>
        <location evidence="4">Early endosome</location>
    </subcellularLocation>
    <text>Predominantly located in late endosomes/lysosomes, only partially detected in early endosome and not at all in the Golgi apparatus.</text>
</comment>
<comment type="alternative products">
    <event type="alternative splicing"/>
    <isoform>
        <id>Q80U62-1</id>
        <name>1</name>
        <sequence type="displayed"/>
    </isoform>
    <isoform>
        <id>Q80U62-2</id>
        <name>2</name>
        <sequence type="described" ref="VSP_017111"/>
    </isoform>
    <isoform>
        <id>Q80U62-3</id>
        <name>3</name>
        <sequence type="described" ref="VSP_017110 VSP_017111"/>
    </isoform>
    <isoform>
        <id>Q80U62-4</id>
        <name>4</name>
        <sequence type="described" ref="VSP_039474 VSP_017110 VSP_017111"/>
    </isoform>
</comment>
<comment type="sequence caution" evidence="7">
    <conflict type="erroneous initiation">
        <sequence resource="EMBL-CDS" id="AAH57307"/>
    </conflict>
    <text>Extended N-terminus.</text>
</comment>
<comment type="sequence caution" evidence="7">
    <conflict type="erroneous initiation">
        <sequence resource="EMBL-CDS" id="BAC65503"/>
    </conflict>
    <text>Extended N-terminus.</text>
</comment>
<evidence type="ECO:0000250" key="1">
    <source>
        <dbReference type="UniProtKB" id="Q92622"/>
    </source>
</evidence>
<evidence type="ECO:0000255" key="2">
    <source>
        <dbReference type="PROSITE-ProRule" id="PRU00178"/>
    </source>
</evidence>
<evidence type="ECO:0000256" key="3">
    <source>
        <dbReference type="SAM" id="MobiDB-lite"/>
    </source>
</evidence>
<evidence type="ECO:0000269" key="4">
    <source>
    </source>
</evidence>
<evidence type="ECO:0000303" key="5">
    <source>
    </source>
</evidence>
<evidence type="ECO:0000303" key="6">
    <source>
    </source>
</evidence>
<evidence type="ECO:0000305" key="7"/>
<evidence type="ECO:0007744" key="8">
    <source>
    </source>
</evidence>
<evidence type="ECO:0007744" key="9">
    <source>
    </source>
</evidence>
<accession>Q80U62</accession>
<accession>Q3TAX3</accession>
<accession>Q3TD96</accession>
<accession>Q3TDF7</accession>
<accession>Q3TDU2</accession>
<accession>Q6NWW8</accession>
<accession>Q6P9T7</accession>
<accession>Q6PG18</accession>
<accession>Q8BMP7</accession>
<accession>Q8BY22</accession>
<organism>
    <name type="scientific">Mus musculus</name>
    <name type="common">Mouse</name>
    <dbReference type="NCBI Taxonomy" id="10090"/>
    <lineage>
        <taxon>Eukaryota</taxon>
        <taxon>Metazoa</taxon>
        <taxon>Chordata</taxon>
        <taxon>Craniata</taxon>
        <taxon>Vertebrata</taxon>
        <taxon>Euteleostomi</taxon>
        <taxon>Mammalia</taxon>
        <taxon>Eutheria</taxon>
        <taxon>Euarchontoglires</taxon>
        <taxon>Glires</taxon>
        <taxon>Rodentia</taxon>
        <taxon>Myomorpha</taxon>
        <taxon>Muroidea</taxon>
        <taxon>Muridae</taxon>
        <taxon>Murinae</taxon>
        <taxon>Mus</taxon>
        <taxon>Mus</taxon>
    </lineage>
</organism>
<reference key="1">
    <citation type="journal article" date="2003" name="DNA Res.">
        <title>Prediction of the coding sequences of mouse homologues of KIAA gene: II. The complete nucleotide sequences of 400 mouse KIAA-homologous cDNAs identified by screening of terminal sequences of cDNA clones randomly sampled from size-fractionated libraries.</title>
        <authorList>
            <person name="Okazaki N."/>
            <person name="Kikuno R."/>
            <person name="Ohara R."/>
            <person name="Inamoto S."/>
            <person name="Aizawa H."/>
            <person name="Yuasa S."/>
            <person name="Nakajima D."/>
            <person name="Nagase T."/>
            <person name="Ohara O."/>
            <person name="Koga H."/>
        </authorList>
    </citation>
    <scope>NUCLEOTIDE SEQUENCE [LARGE SCALE MRNA] (ISOFORM 1)</scope>
    <source>
        <tissue>Brain</tissue>
    </source>
</reference>
<reference key="2">
    <citation type="journal article" date="2005" name="Science">
        <title>The transcriptional landscape of the mammalian genome.</title>
        <authorList>
            <person name="Carninci P."/>
            <person name="Kasukawa T."/>
            <person name="Katayama S."/>
            <person name="Gough J."/>
            <person name="Frith M.C."/>
            <person name="Maeda N."/>
            <person name="Oyama R."/>
            <person name="Ravasi T."/>
            <person name="Lenhard B."/>
            <person name="Wells C."/>
            <person name="Kodzius R."/>
            <person name="Shimokawa K."/>
            <person name="Bajic V.B."/>
            <person name="Brenner S.E."/>
            <person name="Batalov S."/>
            <person name="Forrest A.R."/>
            <person name="Zavolan M."/>
            <person name="Davis M.J."/>
            <person name="Wilming L.G."/>
            <person name="Aidinis V."/>
            <person name="Allen J.E."/>
            <person name="Ambesi-Impiombato A."/>
            <person name="Apweiler R."/>
            <person name="Aturaliya R.N."/>
            <person name="Bailey T.L."/>
            <person name="Bansal M."/>
            <person name="Baxter L."/>
            <person name="Beisel K.W."/>
            <person name="Bersano T."/>
            <person name="Bono H."/>
            <person name="Chalk A.M."/>
            <person name="Chiu K.P."/>
            <person name="Choudhary V."/>
            <person name="Christoffels A."/>
            <person name="Clutterbuck D.R."/>
            <person name="Crowe M.L."/>
            <person name="Dalla E."/>
            <person name="Dalrymple B.P."/>
            <person name="de Bono B."/>
            <person name="Della Gatta G."/>
            <person name="di Bernardo D."/>
            <person name="Down T."/>
            <person name="Engstrom P."/>
            <person name="Fagiolini M."/>
            <person name="Faulkner G."/>
            <person name="Fletcher C.F."/>
            <person name="Fukushima T."/>
            <person name="Furuno M."/>
            <person name="Futaki S."/>
            <person name="Gariboldi M."/>
            <person name="Georgii-Hemming P."/>
            <person name="Gingeras T.R."/>
            <person name="Gojobori T."/>
            <person name="Green R.E."/>
            <person name="Gustincich S."/>
            <person name="Harbers M."/>
            <person name="Hayashi Y."/>
            <person name="Hensch T.K."/>
            <person name="Hirokawa N."/>
            <person name="Hill D."/>
            <person name="Huminiecki L."/>
            <person name="Iacono M."/>
            <person name="Ikeo K."/>
            <person name="Iwama A."/>
            <person name="Ishikawa T."/>
            <person name="Jakt M."/>
            <person name="Kanapin A."/>
            <person name="Katoh M."/>
            <person name="Kawasawa Y."/>
            <person name="Kelso J."/>
            <person name="Kitamura H."/>
            <person name="Kitano H."/>
            <person name="Kollias G."/>
            <person name="Krishnan S.P."/>
            <person name="Kruger A."/>
            <person name="Kummerfeld S.K."/>
            <person name="Kurochkin I.V."/>
            <person name="Lareau L.F."/>
            <person name="Lazarevic D."/>
            <person name="Lipovich L."/>
            <person name="Liu J."/>
            <person name="Liuni S."/>
            <person name="McWilliam S."/>
            <person name="Madan Babu M."/>
            <person name="Madera M."/>
            <person name="Marchionni L."/>
            <person name="Matsuda H."/>
            <person name="Matsuzawa S."/>
            <person name="Miki H."/>
            <person name="Mignone F."/>
            <person name="Miyake S."/>
            <person name="Morris K."/>
            <person name="Mottagui-Tabar S."/>
            <person name="Mulder N."/>
            <person name="Nakano N."/>
            <person name="Nakauchi H."/>
            <person name="Ng P."/>
            <person name="Nilsson R."/>
            <person name="Nishiguchi S."/>
            <person name="Nishikawa S."/>
            <person name="Nori F."/>
            <person name="Ohara O."/>
            <person name="Okazaki Y."/>
            <person name="Orlando V."/>
            <person name="Pang K.C."/>
            <person name="Pavan W.J."/>
            <person name="Pavesi G."/>
            <person name="Pesole G."/>
            <person name="Petrovsky N."/>
            <person name="Piazza S."/>
            <person name="Reed J."/>
            <person name="Reid J.F."/>
            <person name="Ring B.Z."/>
            <person name="Ringwald M."/>
            <person name="Rost B."/>
            <person name="Ruan Y."/>
            <person name="Salzberg S.L."/>
            <person name="Sandelin A."/>
            <person name="Schneider C."/>
            <person name="Schoenbach C."/>
            <person name="Sekiguchi K."/>
            <person name="Semple C.A."/>
            <person name="Seno S."/>
            <person name="Sessa L."/>
            <person name="Sheng Y."/>
            <person name="Shibata Y."/>
            <person name="Shimada H."/>
            <person name="Shimada K."/>
            <person name="Silva D."/>
            <person name="Sinclair B."/>
            <person name="Sperling S."/>
            <person name="Stupka E."/>
            <person name="Sugiura K."/>
            <person name="Sultana R."/>
            <person name="Takenaka Y."/>
            <person name="Taki K."/>
            <person name="Tammoja K."/>
            <person name="Tan S.L."/>
            <person name="Tang S."/>
            <person name="Taylor M.S."/>
            <person name="Tegner J."/>
            <person name="Teichmann S.A."/>
            <person name="Ueda H.R."/>
            <person name="van Nimwegen E."/>
            <person name="Verardo R."/>
            <person name="Wei C.L."/>
            <person name="Yagi K."/>
            <person name="Yamanishi H."/>
            <person name="Zabarovsky E."/>
            <person name="Zhu S."/>
            <person name="Zimmer A."/>
            <person name="Hide W."/>
            <person name="Bult C."/>
            <person name="Grimmond S.M."/>
            <person name="Teasdale R.D."/>
            <person name="Liu E.T."/>
            <person name="Brusic V."/>
            <person name="Quackenbush J."/>
            <person name="Wahlestedt C."/>
            <person name="Mattick J.S."/>
            <person name="Hume D.A."/>
            <person name="Kai C."/>
            <person name="Sasaki D."/>
            <person name="Tomaru Y."/>
            <person name="Fukuda S."/>
            <person name="Kanamori-Katayama M."/>
            <person name="Suzuki M."/>
            <person name="Aoki J."/>
            <person name="Arakawa T."/>
            <person name="Iida J."/>
            <person name="Imamura K."/>
            <person name="Itoh M."/>
            <person name="Kato T."/>
            <person name="Kawaji H."/>
            <person name="Kawagashira N."/>
            <person name="Kawashima T."/>
            <person name="Kojima M."/>
            <person name="Kondo S."/>
            <person name="Konno H."/>
            <person name="Nakano K."/>
            <person name="Ninomiya N."/>
            <person name="Nishio T."/>
            <person name="Okada M."/>
            <person name="Plessy C."/>
            <person name="Shibata K."/>
            <person name="Shiraki T."/>
            <person name="Suzuki S."/>
            <person name="Tagami M."/>
            <person name="Waki K."/>
            <person name="Watahiki A."/>
            <person name="Okamura-Oho Y."/>
            <person name="Suzuki H."/>
            <person name="Kawai J."/>
            <person name="Hayashizaki Y."/>
        </authorList>
    </citation>
    <scope>NUCLEOTIDE SEQUENCE [LARGE SCALE MRNA] (ISOFORMS 2; 3 AND 4)</scope>
    <source>
        <strain>C57BL/6J</strain>
        <strain>NOD</strain>
        <tissue>Dendritic cell</tissue>
        <tissue>Pituitary</tissue>
        <tissue>Thymus</tissue>
    </source>
</reference>
<reference key="3">
    <citation type="journal article" date="2009" name="PLoS Biol.">
        <title>Lineage-specific biology revealed by a finished genome assembly of the mouse.</title>
        <authorList>
            <person name="Church D.M."/>
            <person name="Goodstadt L."/>
            <person name="Hillier L.W."/>
            <person name="Zody M.C."/>
            <person name="Goldstein S."/>
            <person name="She X."/>
            <person name="Bult C.J."/>
            <person name="Agarwala R."/>
            <person name="Cherry J.L."/>
            <person name="DiCuccio M."/>
            <person name="Hlavina W."/>
            <person name="Kapustin Y."/>
            <person name="Meric P."/>
            <person name="Maglott D."/>
            <person name="Birtle Z."/>
            <person name="Marques A.C."/>
            <person name="Graves T."/>
            <person name="Zhou S."/>
            <person name="Teague B."/>
            <person name="Potamousis K."/>
            <person name="Churas C."/>
            <person name="Place M."/>
            <person name="Herschleb J."/>
            <person name="Runnheim R."/>
            <person name="Forrest D."/>
            <person name="Amos-Landgraf J."/>
            <person name="Schwartz D.C."/>
            <person name="Cheng Z."/>
            <person name="Lindblad-Toh K."/>
            <person name="Eichler E.E."/>
            <person name="Ponting C.P."/>
        </authorList>
    </citation>
    <scope>NUCLEOTIDE SEQUENCE [LARGE SCALE GENOMIC DNA]</scope>
    <source>
        <strain>C57BL/6J</strain>
    </source>
</reference>
<reference key="4">
    <citation type="journal article" date="2004" name="Genome Res.">
        <title>The status, quality, and expansion of the NIH full-length cDNA project: the Mammalian Gene Collection (MGC).</title>
        <authorList>
            <consortium name="The MGC Project Team"/>
        </authorList>
    </citation>
    <scope>NUCLEOTIDE SEQUENCE [LARGE SCALE MRNA] (ISOFORMS 1 AND 2)</scope>
    <source>
        <strain>C57BL/6J</strain>
        <tissue>Brain</tissue>
        <tissue>Embryo</tissue>
    </source>
</reference>
<reference key="5">
    <citation type="journal article" date="2009" name="Immunity">
        <title>The phagosomal proteome in interferon-gamma-activated macrophages.</title>
        <authorList>
            <person name="Trost M."/>
            <person name="English L."/>
            <person name="Lemieux S."/>
            <person name="Courcelles M."/>
            <person name="Desjardins M."/>
            <person name="Thibault P."/>
        </authorList>
    </citation>
    <scope>PHOSPHORYLATION [LARGE SCALE ANALYSIS] AT SER-390 AND SER-412</scope>
    <scope>IDENTIFICATION BY MASS SPECTROMETRY [LARGE SCALE ANALYSIS]</scope>
</reference>
<reference key="6">
    <citation type="journal article" date="2009" name="Nat. Cell Biol.">
        <title>Distinct regulation of autophagic activity by Atg14L and Rubicon associated with Beclin 1-phosphatidylinositol-3-kinase complex.</title>
        <authorList>
            <person name="Zhong Y."/>
            <person name="Wang Q.J."/>
            <person name="Li X."/>
            <person name="Yan Y."/>
            <person name="Backer J.M."/>
            <person name="Chait B.T."/>
            <person name="Heintz N."/>
            <person name="Yue Z."/>
        </authorList>
    </citation>
    <scope>FUNCTION</scope>
    <scope>SUBCELLULAR LOCATION</scope>
    <scope>INTERACTION WITH BECN1; PIK3C3 AND UVRAG</scope>
</reference>
<reference key="7">
    <citation type="journal article" date="2010" name="Cell">
        <title>A tissue-specific atlas of mouse protein phosphorylation and expression.</title>
        <authorList>
            <person name="Huttlin E.L."/>
            <person name="Jedrychowski M.P."/>
            <person name="Elias J.E."/>
            <person name="Goswami T."/>
            <person name="Rad R."/>
            <person name="Beausoleil S.A."/>
            <person name="Villen J."/>
            <person name="Haas W."/>
            <person name="Sowa M.E."/>
            <person name="Gygi S.P."/>
        </authorList>
    </citation>
    <scope>PHOSPHORYLATION [LARGE SCALE ANALYSIS] AT SER-412</scope>
    <scope>IDENTIFICATION BY MASS SPECTROMETRY [LARGE SCALE ANALYSIS]</scope>
    <source>
        <tissue>Kidney</tissue>
        <tissue>Lung</tissue>
        <tissue>Spleen</tissue>
        <tissue>Testis</tissue>
    </source>
</reference>
<name>RUBIC_MOUSE</name>
<protein>
    <recommendedName>
        <fullName evidence="1">Run domain Beclin-1-interacting and cysteine-rich domain-containing protein</fullName>
        <shortName>Rubicon</shortName>
    </recommendedName>
</protein>
<sequence length="956" mass="106860">MRPEGAGMDLGGGDGERLLEKSRREHWQLLGNLKTTVEGLVSANCPNVWSKYGGLERLCRDMQNILYHGLIHDQVCCRQADYWQFVKDIRWLSPHSALHVEKFISLHESDQSDTDSVSERAVAELWLQHSLQCHCLSAQLRPLLGDRQYIRKFYTETAFLLSDAHVTAMLQCLEAVEQNNPRLLAQIDASMFARKQESPLLVTKSQSLTALPGSTYTPPASYAQHSYFGSSSSLQSMPQSSHSSERRSTSFSLSGPSWQPQEDRECLSPAETQTTPAPLPSDSTLAQDSPLTAQEMSDSTLTSPLEASWVSSQNDSPSDVSEGPEYLAIGNPAPHGRTASCESHSSNGESSSSHLFSSSSSQKLESAASSLGDQEEGRQSQAGSVLRRSSFSEGQTAPVASGTKKSHIRSHSDTNIASRGAAGGPRNITIIVEDPIAEGGQYLCSGEGMFRRPSEGQSLISYLSEQDFGSCADLEKENAHFSISESLIAAIELMKCNMMSQCLEEEEVEEEDSDREIQELKQKIRLRRQQIRTKNLLPAYRETENGSFRVTSSSSQFSSRDSTQLSESGSAEDADDLEIQDADIRRSAVSNGKSSFSQNLSHCFLHSTSAEAVAMGLLKQFEGMQLPAASELEWLVPEHDAPQKLLPIPDSLPISPDDGQHADIYKLRIRVRGNLEWAPPRPQIIFNVHPAPTRKIAVAKQNYRCAGCGIRTDPDYIKRLRYCEYLGKYFCQCCHENAQMVVPSRILRKWDFSKYYVSNFSKDLLLKIWNDPLFNVQDINSALYRKVKLLNQVRLLRVQLYHMKNMFKTCRLAKELLDSFDVVPGHLTEDLHLYSLSDLTATKKGELGPRLAELTRAGAAHVERCMLCQAKGFICEFCQNEEDVIFPFELHKCRTCEECKACYHKTCFKSGRCPRCERLQARRELLAKQSLESYLSDYEEEPTEALALEATVLETT</sequence>
<keyword id="KW-0025">Alternative splicing</keyword>
<keyword id="KW-0072">Autophagy</keyword>
<keyword id="KW-0254">Endocytosis</keyword>
<keyword id="KW-0967">Endosome</keyword>
<keyword id="KW-0391">Immunity</keyword>
<keyword id="KW-0458">Lysosome</keyword>
<keyword id="KW-0597">Phosphoprotein</keyword>
<keyword id="KW-1185">Reference proteome</keyword>
<feature type="chain" id="PRO_0000050737" description="Run domain Beclin-1-interacting and cysteine-rich domain-containing protein">
    <location>
        <begin position="1"/>
        <end position="956"/>
    </location>
</feature>
<feature type="domain" description="RUN" evidence="2">
    <location>
        <begin position="49"/>
        <end position="190"/>
    </location>
</feature>
<feature type="region of interest" description="Interaction with PIK3C3" evidence="1">
    <location>
        <begin position="50"/>
        <end position="181"/>
    </location>
</feature>
<feature type="region of interest" description="Interaction with YWHAB" evidence="1">
    <location>
        <begin position="205"/>
        <end position="437"/>
    </location>
</feature>
<feature type="region of interest" description="Disordered" evidence="3">
    <location>
        <begin position="233"/>
        <end position="423"/>
    </location>
</feature>
<feature type="region of interest" description="Interaction with UVRAG" evidence="1">
    <location>
        <begin position="302"/>
        <end position="585"/>
    </location>
</feature>
<feature type="region of interest" description="Interaction with BECN1" evidence="1">
    <location>
        <begin position="490"/>
        <end position="542"/>
    </location>
</feature>
<feature type="region of interest" description="Disordered" evidence="3">
    <location>
        <begin position="547"/>
        <end position="579"/>
    </location>
</feature>
<feature type="region of interest" description="Interaction with CYBA" evidence="1">
    <location>
        <begin position="552"/>
        <end position="609"/>
    </location>
</feature>
<feature type="region of interest" description="Interaction with CARD9" evidence="1">
    <location>
        <begin position="656"/>
        <end position="744"/>
    </location>
</feature>
<feature type="region of interest" description="Interaction with Rab7" evidence="1">
    <location>
        <begin position="705"/>
        <end position="956"/>
    </location>
</feature>
<feature type="compositionally biased region" description="Low complexity" evidence="3">
    <location>
        <begin position="233"/>
        <end position="242"/>
    </location>
</feature>
<feature type="compositionally biased region" description="Polar residues" evidence="3">
    <location>
        <begin position="270"/>
        <end position="319"/>
    </location>
</feature>
<feature type="compositionally biased region" description="Low complexity" evidence="3">
    <location>
        <begin position="339"/>
        <end position="371"/>
    </location>
</feature>
<feature type="compositionally biased region" description="Polar residues" evidence="3">
    <location>
        <begin position="379"/>
        <end position="395"/>
    </location>
</feature>
<feature type="compositionally biased region" description="Low complexity" evidence="3">
    <location>
        <begin position="547"/>
        <end position="566"/>
    </location>
</feature>
<feature type="compositionally biased region" description="Acidic residues" evidence="3">
    <location>
        <begin position="570"/>
        <end position="579"/>
    </location>
</feature>
<feature type="modified residue" description="Phosphoserine" evidence="1">
    <location>
        <position position="198"/>
    </location>
</feature>
<feature type="modified residue" description="Phosphoserine" evidence="1">
    <location>
        <position position="250"/>
    </location>
</feature>
<feature type="modified residue" description="Phosphoserine" evidence="1">
    <location>
        <position position="268"/>
    </location>
</feature>
<feature type="modified residue" description="Phosphoserine" evidence="8">
    <location>
        <position position="390"/>
    </location>
</feature>
<feature type="modified residue" description="Phosphoserine" evidence="8 9">
    <location>
        <position position="412"/>
    </location>
</feature>
<feature type="modified residue" description="Phosphoserine" evidence="1">
    <location>
        <position position="513"/>
    </location>
</feature>
<feature type="modified residue" description="Phosphoserine" evidence="1">
    <location>
        <position position="547"/>
    </location>
</feature>
<feature type="modified residue" description="Phosphoserine" evidence="1">
    <location>
        <position position="655"/>
    </location>
</feature>
<feature type="splice variant" id="VSP_039474" description="In isoform 4." evidence="6">
    <location>
        <begin position="1"/>
        <end position="61"/>
    </location>
</feature>
<feature type="splice variant" id="VSP_017110" description="In isoform 3 and isoform 4." evidence="6">
    <location>
        <begin position="347"/>
        <end position="360"/>
    </location>
</feature>
<feature type="splice variant" id="VSP_017111" description="In isoform 2, isoform 3 and isoform 4." evidence="5 6">
    <location>
        <begin position="423"/>
        <end position="437"/>
    </location>
</feature>
<feature type="sequence conflict" description="In Ref. 2; BAE41507/BAE41645." evidence="7" ref="2">
    <original>G</original>
    <variation>S</variation>
    <location>
        <position position="5"/>
    </location>
</feature>
<feature type="sequence conflict" description="In Ref. 3; AAH67390." evidence="7" ref="3">
    <original>D</original>
    <variation>G</variation>
    <location>
        <position position="88"/>
    </location>
</feature>
<feature type="sequence conflict" description="In Ref. 2; BAE41507/BAE41645/BAE41708." evidence="7" ref="2">
    <original>T</original>
    <variation>N</variation>
    <location>
        <position position="217"/>
    </location>
</feature>
<feature type="sequence conflict" description="In Ref. 2; BAE41645." evidence="7" ref="2">
    <original>S</original>
    <variation>P</variation>
    <location>
        <position position="248"/>
    </location>
</feature>
<feature type="sequence conflict" description="In Ref. 2; BAE41708." evidence="7" ref="2">
    <original>D</original>
    <variation>G</variation>
    <location>
        <position position="298"/>
    </location>
</feature>
<feature type="sequence conflict" description="In Ref. 3; AAH67390." evidence="7" ref="3">
    <original>P</original>
    <variation>S</variation>
    <location>
        <position position="304"/>
    </location>
</feature>
<feature type="sequence conflict" description="In Ref. 3; AAH67390." evidence="7" ref="3">
    <original>Q</original>
    <variation>L</variation>
    <location>
        <position position="379"/>
    </location>
</feature>
<feature type="sequence conflict" description="In Ref. 2; BAE42541." evidence="7" ref="2">
    <original>S</original>
    <variation>G</variation>
    <location>
        <position position="470"/>
    </location>
</feature>
<feature type="sequence conflict" description="In Ref. 3; AAH67390." evidence="7" ref="3">
    <original>A</original>
    <variation>T</variation>
    <location>
        <position position="628"/>
    </location>
</feature>
<feature type="sequence conflict" description="In Ref. 2; BAE42541." evidence="7" ref="2">
    <original>H</original>
    <variation>Q</variation>
    <location>
        <position position="661"/>
    </location>
</feature>
<feature type="sequence conflict" description="In Ref. 3; AAH67390." evidence="7" ref="3">
    <original>C</original>
    <variation>R</variation>
    <location>
        <position position="865"/>
    </location>
</feature>
<feature type="sequence conflict" description="In Ref. 2; BAE41708." evidence="7" ref="2">
    <original>A</original>
    <variation>T</variation>
    <location>
        <position position="901"/>
    </location>
</feature>
<feature type="sequence conflict" description="In Ref. 2; BAC31257." evidence="7" ref="2">
    <original>T</original>
    <variation>P</variation>
    <location>
        <position position="951"/>
    </location>
</feature>
<proteinExistence type="evidence at protein level"/>
<gene>
    <name evidence="1" type="primary">Rubcn</name>
    <name type="synonym">Kiaa0226</name>
</gene>
<dbReference type="EMBL" id="AK122221">
    <property type="protein sequence ID" value="BAC65503.1"/>
    <property type="status" value="ALT_INIT"/>
    <property type="molecule type" value="mRNA"/>
</dbReference>
<dbReference type="EMBL" id="AK030368">
    <property type="protein sequence ID" value="BAC26925.1"/>
    <property type="molecule type" value="mRNA"/>
</dbReference>
<dbReference type="EMBL" id="AK042428">
    <property type="protein sequence ID" value="BAC31257.1"/>
    <property type="molecule type" value="mRNA"/>
</dbReference>
<dbReference type="EMBL" id="AK170002">
    <property type="protein sequence ID" value="BAE41507.1"/>
    <property type="molecule type" value="mRNA"/>
</dbReference>
<dbReference type="EMBL" id="AK170223">
    <property type="protein sequence ID" value="BAE41645.1"/>
    <property type="molecule type" value="mRNA"/>
</dbReference>
<dbReference type="EMBL" id="AK170312">
    <property type="protein sequence ID" value="BAE41708.1"/>
    <property type="molecule type" value="mRNA"/>
</dbReference>
<dbReference type="EMBL" id="AK171583">
    <property type="protein sequence ID" value="BAE42541.1"/>
    <property type="molecule type" value="mRNA"/>
</dbReference>
<dbReference type="EMBL" id="AC139244">
    <property type="status" value="NOT_ANNOTATED_CDS"/>
    <property type="molecule type" value="Genomic_DNA"/>
</dbReference>
<dbReference type="EMBL" id="BC057307">
    <property type="protein sequence ID" value="AAH57307.1"/>
    <property type="status" value="ALT_INIT"/>
    <property type="molecule type" value="mRNA"/>
</dbReference>
<dbReference type="EMBL" id="BC060601">
    <property type="protein sequence ID" value="AAH60601.1"/>
    <property type="molecule type" value="mRNA"/>
</dbReference>
<dbReference type="EMBL" id="BC067390">
    <property type="protein sequence ID" value="AAH67390.1"/>
    <property type="molecule type" value="mRNA"/>
</dbReference>
<dbReference type="CCDS" id="CCDS28124.1">
    <molecule id="Q80U62-2"/>
</dbReference>
<dbReference type="CCDS" id="CCDS49832.1">
    <molecule id="Q80U62-1"/>
</dbReference>
<dbReference type="RefSeq" id="NP_001186967.1">
    <molecule id="Q80U62-1"/>
    <property type="nucleotide sequence ID" value="NM_001200038.1"/>
</dbReference>
<dbReference type="RefSeq" id="NP_766203.1">
    <molecule id="Q80U62-2"/>
    <property type="nucleotide sequence ID" value="NM_172615.4"/>
</dbReference>
<dbReference type="SMR" id="Q80U62"/>
<dbReference type="BioGRID" id="426598">
    <property type="interactions" value="5"/>
</dbReference>
<dbReference type="FunCoup" id="Q80U62">
    <property type="interactions" value="4270"/>
</dbReference>
<dbReference type="IntAct" id="Q80U62">
    <property type="interactions" value="21"/>
</dbReference>
<dbReference type="MINT" id="Q80U62"/>
<dbReference type="STRING" id="10090.ENSMUSP00000087114"/>
<dbReference type="GlyGen" id="Q80U62">
    <property type="glycosylation" value="1 site"/>
</dbReference>
<dbReference type="iPTMnet" id="Q80U62"/>
<dbReference type="PhosphoSitePlus" id="Q80U62"/>
<dbReference type="jPOST" id="Q80U62"/>
<dbReference type="PaxDb" id="10090-ENSMUSP00000087114"/>
<dbReference type="ProteomicsDB" id="260747">
    <molecule id="Q80U62-1"/>
</dbReference>
<dbReference type="ProteomicsDB" id="260748">
    <molecule id="Q80U62-2"/>
</dbReference>
<dbReference type="ProteomicsDB" id="260749">
    <molecule id="Q80U62-3"/>
</dbReference>
<dbReference type="ProteomicsDB" id="260750">
    <molecule id="Q80U62-4"/>
</dbReference>
<dbReference type="Antibodypedia" id="54002">
    <property type="antibodies" value="196 antibodies from 27 providers"/>
</dbReference>
<dbReference type="Ensembl" id="ENSMUST00000040986.15">
    <molecule id="Q80U62-2"/>
    <property type="protein sequence ID" value="ENSMUSP00000048811.9"/>
    <property type="gene ID" value="ENSMUSG00000035629.20"/>
</dbReference>
<dbReference type="Ensembl" id="ENSMUST00000089684.10">
    <molecule id="Q80U62-1"/>
    <property type="protein sequence ID" value="ENSMUSP00000087114.4"/>
    <property type="gene ID" value="ENSMUSG00000035629.20"/>
</dbReference>
<dbReference type="Ensembl" id="ENSMUST00000115105.9">
    <molecule id="Q80U62-3"/>
    <property type="protein sequence ID" value="ENSMUSP00000110757.3"/>
    <property type="gene ID" value="ENSMUSG00000035629.20"/>
</dbReference>
<dbReference type="GeneID" id="100502698"/>
<dbReference type="KEGG" id="mmu:100502698"/>
<dbReference type="UCSC" id="uc007yzk.2">
    <molecule id="Q80U62-1"/>
    <property type="organism name" value="mouse"/>
</dbReference>
<dbReference type="UCSC" id="uc007yzl.2">
    <molecule id="Q80U62-2"/>
    <property type="organism name" value="mouse"/>
</dbReference>
<dbReference type="AGR" id="MGI:1915160"/>
<dbReference type="CTD" id="9711"/>
<dbReference type="MGI" id="MGI:1915160">
    <property type="gene designation" value="Rubcn"/>
</dbReference>
<dbReference type="VEuPathDB" id="HostDB:ENSMUSG00000035629"/>
<dbReference type="eggNOG" id="KOG1829">
    <property type="taxonomic scope" value="Eukaryota"/>
</dbReference>
<dbReference type="eggNOG" id="KOG4381">
    <property type="taxonomic scope" value="Eukaryota"/>
</dbReference>
<dbReference type="GeneTree" id="ENSGT00940000160658"/>
<dbReference type="HOGENOM" id="CLU_013778_0_0_1"/>
<dbReference type="InParanoid" id="Q80U62"/>
<dbReference type="OMA" id="CADLEKX"/>
<dbReference type="OrthoDB" id="10067503at2759"/>
<dbReference type="PhylomeDB" id="Q80U62"/>
<dbReference type="TreeFam" id="TF317067"/>
<dbReference type="BioGRID-ORCS" id="100502698">
    <property type="hits" value="3 hits in 44 CRISPR screens"/>
</dbReference>
<dbReference type="ChiTaRS" id="Rubcn">
    <property type="organism name" value="mouse"/>
</dbReference>
<dbReference type="PRO" id="PR:Q80U62"/>
<dbReference type="Proteomes" id="UP000000589">
    <property type="component" value="Chromosome 16"/>
</dbReference>
<dbReference type="RNAct" id="Q80U62">
    <property type="molecule type" value="protein"/>
</dbReference>
<dbReference type="Bgee" id="ENSMUSG00000035629">
    <property type="expression patterns" value="Expressed in secondary oocyte and 218 other cell types or tissues"/>
</dbReference>
<dbReference type="ExpressionAtlas" id="Q80U62">
    <property type="expression patterns" value="baseline and differential"/>
</dbReference>
<dbReference type="GO" id="GO:0005829">
    <property type="term" value="C:cytosol"/>
    <property type="evidence" value="ECO:0007669"/>
    <property type="project" value="Ensembl"/>
</dbReference>
<dbReference type="GO" id="GO:0005769">
    <property type="term" value="C:early endosome"/>
    <property type="evidence" value="ECO:0007669"/>
    <property type="project" value="UniProtKB-SubCell"/>
</dbReference>
<dbReference type="GO" id="GO:0005770">
    <property type="term" value="C:late endosome"/>
    <property type="evidence" value="ECO:0007669"/>
    <property type="project" value="UniProtKB-SubCell"/>
</dbReference>
<dbReference type="GO" id="GO:0005764">
    <property type="term" value="C:lysosome"/>
    <property type="evidence" value="ECO:0007669"/>
    <property type="project" value="UniProtKB-SubCell"/>
</dbReference>
<dbReference type="GO" id="GO:0005654">
    <property type="term" value="C:nucleoplasm"/>
    <property type="evidence" value="ECO:0007669"/>
    <property type="project" value="Ensembl"/>
</dbReference>
<dbReference type="GO" id="GO:0141039">
    <property type="term" value="F:phosphatidylinositol 3-kinase inhibitor activity"/>
    <property type="evidence" value="ECO:0007669"/>
    <property type="project" value="Ensembl"/>
</dbReference>
<dbReference type="GO" id="GO:0006914">
    <property type="term" value="P:autophagy"/>
    <property type="evidence" value="ECO:0007669"/>
    <property type="project" value="UniProtKB-KW"/>
</dbReference>
<dbReference type="GO" id="GO:0006897">
    <property type="term" value="P:endocytosis"/>
    <property type="evidence" value="ECO:0007669"/>
    <property type="project" value="UniProtKB-KW"/>
</dbReference>
<dbReference type="GO" id="GO:0002376">
    <property type="term" value="P:immune system process"/>
    <property type="evidence" value="ECO:0007669"/>
    <property type="project" value="UniProtKB-KW"/>
</dbReference>
<dbReference type="GO" id="GO:1901097">
    <property type="term" value="P:negative regulation of autophagosome maturation"/>
    <property type="evidence" value="ECO:0007669"/>
    <property type="project" value="Ensembl"/>
</dbReference>
<dbReference type="GO" id="GO:0045806">
    <property type="term" value="P:negative regulation of endocytosis"/>
    <property type="evidence" value="ECO:0007669"/>
    <property type="project" value="Ensembl"/>
</dbReference>
<dbReference type="GO" id="GO:0051898">
    <property type="term" value="P:negative regulation of phosphatidylinositol 3-kinase/protein kinase B signal transduction"/>
    <property type="evidence" value="ECO:0007669"/>
    <property type="project" value="Ensembl"/>
</dbReference>
<dbReference type="CDD" id="cd17686">
    <property type="entry name" value="RUN_RUBCN"/>
    <property type="match status" value="1"/>
</dbReference>
<dbReference type="Gene3D" id="1.20.58.900">
    <property type="match status" value="1"/>
</dbReference>
<dbReference type="InterPro" id="IPR052428">
    <property type="entry name" value="Autophagy_HostDef_Reg"/>
</dbReference>
<dbReference type="InterPro" id="IPR025258">
    <property type="entry name" value="RH_dom"/>
</dbReference>
<dbReference type="InterPro" id="IPR048569">
    <property type="entry name" value="RUBC_PIKBD"/>
</dbReference>
<dbReference type="InterPro" id="IPR004012">
    <property type="entry name" value="Run_dom"/>
</dbReference>
<dbReference type="InterPro" id="IPR037213">
    <property type="entry name" value="Run_dom_sf"/>
</dbReference>
<dbReference type="PANTHER" id="PTHR45971">
    <property type="entry name" value="PHOX (PX) DOMAIN-CONTAINING PROTEIN"/>
    <property type="match status" value="1"/>
</dbReference>
<dbReference type="PANTHER" id="PTHR45971:SF3">
    <property type="entry name" value="RUN DOMAIN BECLIN-1-INTERACTING AND CYSTEINE-RICH DOMAIN-CONTAINING PROTEIN"/>
    <property type="match status" value="1"/>
</dbReference>
<dbReference type="Pfam" id="PF13901">
    <property type="entry name" value="RH_dom"/>
    <property type="match status" value="1"/>
</dbReference>
<dbReference type="Pfam" id="PF21054">
    <property type="entry name" value="RUBC_PIKBD"/>
    <property type="match status" value="1"/>
</dbReference>
<dbReference type="Pfam" id="PF02759">
    <property type="entry name" value="RUN"/>
    <property type="match status" value="1"/>
</dbReference>
<dbReference type="SMART" id="SM01175">
    <property type="entry name" value="DUF4206"/>
    <property type="match status" value="1"/>
</dbReference>
<dbReference type="SMART" id="SM00593">
    <property type="entry name" value="RUN"/>
    <property type="match status" value="1"/>
</dbReference>
<dbReference type="SUPFAM" id="SSF140741">
    <property type="entry name" value="RUN domain-like"/>
    <property type="match status" value="1"/>
</dbReference>
<dbReference type="PROSITE" id="PS50826">
    <property type="entry name" value="RUN"/>
    <property type="match status" value="1"/>
</dbReference>